<comment type="function">
    <text evidence="1">Inhibits fibrinogen interaction with platelets. Acts by binding to the alpha-IIb/beta-3 (ITGA2B/ITGB3) on the platelet surface and inhibits aggregation induced by ADP, thrombin, platelet-activating factor and collagen (By similarity).</text>
</comment>
<comment type="subunit">
    <text evidence="1">Monomer (disintegrin).</text>
</comment>
<comment type="subcellular location">
    <subcellularLocation>
        <location evidence="1">Secreted</location>
    </subcellularLocation>
</comment>
<comment type="tissue specificity">
    <text>Expressed by the venom gland.</text>
</comment>
<comment type="miscellaneous">
    <text>The disintegrin belongs to the long disintegrin subfamily.</text>
</comment>
<comment type="similarity">
    <text evidence="3">Belongs to the venom metalloproteinase (M12B) family. P-II subfamily. P-IIa sub-subfamily.</text>
</comment>
<evidence type="ECO:0000250" key="1"/>
<evidence type="ECO:0000255" key="2">
    <source>
        <dbReference type="PROSITE-ProRule" id="PRU00068"/>
    </source>
</evidence>
<evidence type="ECO:0000305" key="3"/>
<keyword id="KW-1217">Cell adhesion impairing toxin</keyword>
<keyword id="KW-1015">Disulfide bond</keyword>
<keyword id="KW-1199">Hemostasis impairing toxin</keyword>
<keyword id="KW-1201">Platelet aggregation inhibiting toxin</keyword>
<keyword id="KW-0964">Secreted</keyword>
<keyword id="KW-0800">Toxin</keyword>
<accession>Q4JCS1</accession>
<proteinExistence type="evidence at transcript level"/>
<reference key="1">
    <citation type="submission" date="2005-02" db="EMBL/GenBank/DDBJ databases">
        <title>Isolation of cDNAs encoding five Bitis arietans disintegrin isoforms and identification of shared antigenic epitopes.</title>
        <authorList>
            <person name="Oliver J."/>
            <person name="Theakston R.D.G."/>
            <person name="Harrison R.A."/>
        </authorList>
    </citation>
    <scope>NUCLEOTIDE SEQUENCE [MRNA]</scope>
    <source>
        <tissue>Venom gland</tissue>
    </source>
</reference>
<sequence length="83" mass="9149">SPPVCGNELLEEGEECDCDSPANCQDRCCNAATCKLTPGSQCNYGECCDQCKFKKARTVCRIARGDWNDDYCTGKSSDCPWNH</sequence>
<feature type="chain" id="PRO_0000318182" description="Disintegrin isoform D-2">
    <location>
        <begin position="1"/>
        <end position="83"/>
    </location>
</feature>
<feature type="domain" description="Disintegrin" evidence="2">
    <location>
        <begin position="2"/>
        <end position="83"/>
    </location>
</feature>
<feature type="short sequence motif" description="Cell attachment site">
    <location>
        <begin position="64"/>
        <end position="66"/>
    </location>
</feature>
<feature type="disulfide bond" evidence="2">
    <location>
        <begin position="5"/>
        <end position="24"/>
    </location>
</feature>
<feature type="disulfide bond" evidence="2">
    <location>
        <begin position="16"/>
        <end position="34"/>
    </location>
</feature>
<feature type="disulfide bond" evidence="2">
    <location>
        <begin position="18"/>
        <end position="29"/>
    </location>
</feature>
<feature type="disulfide bond" evidence="2">
    <location>
        <begin position="28"/>
        <end position="51"/>
    </location>
</feature>
<feature type="disulfide bond" evidence="2">
    <location>
        <begin position="42"/>
        <end position="48"/>
    </location>
</feature>
<feature type="disulfide bond" evidence="2">
    <location>
        <begin position="47"/>
        <end position="72"/>
    </location>
</feature>
<feature type="disulfide bond" evidence="2">
    <location>
        <begin position="60"/>
        <end position="79"/>
    </location>
</feature>
<dbReference type="EMBL" id="AY924403">
    <property type="protein sequence ID" value="AAY43682.1"/>
    <property type="molecule type" value="mRNA"/>
</dbReference>
<dbReference type="SMR" id="Q4JCS1"/>
<dbReference type="GO" id="GO:0005576">
    <property type="term" value="C:extracellular region"/>
    <property type="evidence" value="ECO:0007669"/>
    <property type="project" value="UniProtKB-SubCell"/>
</dbReference>
<dbReference type="GO" id="GO:0005886">
    <property type="term" value="C:plasma membrane"/>
    <property type="evidence" value="ECO:0007669"/>
    <property type="project" value="TreeGrafter"/>
</dbReference>
<dbReference type="GO" id="GO:0090729">
    <property type="term" value="F:toxin activity"/>
    <property type="evidence" value="ECO:0007669"/>
    <property type="project" value="UniProtKB-KW"/>
</dbReference>
<dbReference type="FunFam" id="4.10.70.10:FF:000003">
    <property type="entry name" value="Disintegrin and metalloproteinase domain-containing protein 17"/>
    <property type="match status" value="1"/>
</dbReference>
<dbReference type="Gene3D" id="4.10.70.10">
    <property type="entry name" value="Disintegrin domain"/>
    <property type="match status" value="1"/>
</dbReference>
<dbReference type="InterPro" id="IPR018358">
    <property type="entry name" value="Disintegrin_CS"/>
</dbReference>
<dbReference type="InterPro" id="IPR001762">
    <property type="entry name" value="Disintegrin_dom"/>
</dbReference>
<dbReference type="InterPro" id="IPR036436">
    <property type="entry name" value="Disintegrin_dom_sf"/>
</dbReference>
<dbReference type="PANTHER" id="PTHR11905">
    <property type="entry name" value="ADAM A DISINTEGRIN AND METALLOPROTEASE DOMAIN"/>
    <property type="match status" value="1"/>
</dbReference>
<dbReference type="PANTHER" id="PTHR11905:SF32">
    <property type="entry name" value="DISINTEGRIN AND METALLOPROTEINASE DOMAIN-CONTAINING PROTEIN 28"/>
    <property type="match status" value="1"/>
</dbReference>
<dbReference type="Pfam" id="PF00200">
    <property type="entry name" value="Disintegrin"/>
    <property type="match status" value="1"/>
</dbReference>
<dbReference type="PRINTS" id="PR00289">
    <property type="entry name" value="DISINTEGRIN"/>
</dbReference>
<dbReference type="SMART" id="SM00050">
    <property type="entry name" value="DISIN"/>
    <property type="match status" value="1"/>
</dbReference>
<dbReference type="SUPFAM" id="SSF57552">
    <property type="entry name" value="Blood coagulation inhibitor (disintegrin)"/>
    <property type="match status" value="1"/>
</dbReference>
<dbReference type="PROSITE" id="PS00427">
    <property type="entry name" value="DISINTEGRIN_1"/>
    <property type="match status" value="1"/>
</dbReference>
<dbReference type="PROSITE" id="PS50214">
    <property type="entry name" value="DISINTEGRIN_2"/>
    <property type="match status" value="1"/>
</dbReference>
<protein>
    <recommendedName>
        <fullName>Disintegrin isoform D-2</fullName>
    </recommendedName>
</protein>
<organism>
    <name type="scientific">Bitis arietans</name>
    <name type="common">African puff adder</name>
    <dbReference type="NCBI Taxonomy" id="8692"/>
    <lineage>
        <taxon>Eukaryota</taxon>
        <taxon>Metazoa</taxon>
        <taxon>Chordata</taxon>
        <taxon>Craniata</taxon>
        <taxon>Vertebrata</taxon>
        <taxon>Euteleostomi</taxon>
        <taxon>Lepidosauria</taxon>
        <taxon>Squamata</taxon>
        <taxon>Bifurcata</taxon>
        <taxon>Unidentata</taxon>
        <taxon>Episquamata</taxon>
        <taxon>Toxicofera</taxon>
        <taxon>Serpentes</taxon>
        <taxon>Colubroidea</taxon>
        <taxon>Viperidae</taxon>
        <taxon>Viperinae</taxon>
        <taxon>Bitis</taxon>
    </lineage>
</organism>
<name>VM2D2_BITAR</name>